<feature type="chain" id="PRO_0000191998" description="Harpin secretion protein HrpW">
    <location>
        <begin position="1"/>
        <end position="208"/>
    </location>
</feature>
<feature type="transmembrane region" description="Helical" evidence="1">
    <location>
        <begin position="2"/>
        <end position="22"/>
    </location>
</feature>
<feature type="transmembrane region" description="Helical" evidence="1">
    <location>
        <begin position="46"/>
        <end position="66"/>
    </location>
</feature>
<feature type="transmembrane region" description="Helical" evidence="1">
    <location>
        <begin position="149"/>
        <end position="169"/>
    </location>
</feature>
<feature type="transmembrane region" description="Helical" evidence="1">
    <location>
        <begin position="176"/>
        <end position="196"/>
    </location>
</feature>
<comment type="function">
    <text>Required for the secretion of harpin.</text>
</comment>
<comment type="subcellular location">
    <subcellularLocation>
        <location evidence="2">Cell membrane</location>
        <topology evidence="2">Multi-pass membrane protein</topology>
    </subcellularLocation>
</comment>
<comment type="similarity">
    <text evidence="2">Belongs to the FliP/MopC/SpaP family.</text>
</comment>
<protein>
    <recommendedName>
        <fullName>Harpin secretion protein HrpW</fullName>
    </recommendedName>
</protein>
<gene>
    <name type="primary">hrpW</name>
</gene>
<evidence type="ECO:0000255" key="1"/>
<evidence type="ECO:0000305" key="2"/>
<name>HRPW_PSESY</name>
<reference key="1">
    <citation type="journal article" date="1995" name="Mol. Plant Microbe Interact.">
        <title>The complete hrp gene cluster of Pseudomonas syringae pv. syringae 61 includes two blocks of genes required for harpinPss secretion that are arranged colinearly with Yersinia ysc homologs.</title>
        <authorList>
            <person name="Huang H.-C."/>
            <person name="Lin R.-H."/>
            <person name="Chang C.-J."/>
            <person name="Collmer A."/>
            <person name="Deng W.-L."/>
        </authorList>
    </citation>
    <scope>NUCLEOTIDE SEQUENCE [GENOMIC DNA]</scope>
    <source>
        <strain>Pss61</strain>
    </source>
</reference>
<organism>
    <name type="scientific">Pseudomonas syringae pv. syringae</name>
    <dbReference type="NCBI Taxonomy" id="321"/>
    <lineage>
        <taxon>Bacteria</taxon>
        <taxon>Pseudomonadati</taxon>
        <taxon>Pseudomonadota</taxon>
        <taxon>Gammaproteobacteria</taxon>
        <taxon>Pseudomonadales</taxon>
        <taxon>Pseudomonadaceae</taxon>
        <taxon>Pseudomonas</taxon>
        <taxon>Pseudomonas syringae</taxon>
    </lineage>
</organism>
<keyword id="KW-1003">Cell membrane</keyword>
<keyword id="KW-0928">Hypersensitive response elicitation</keyword>
<keyword id="KW-0472">Membrane</keyword>
<keyword id="KW-0812">Transmembrane</keyword>
<keyword id="KW-1133">Transmembrane helix</keyword>
<proteinExistence type="inferred from homology"/>
<sequence>MLALFLGSLSLIPFLLIVCTAFLKIAMTLLITRNAIGVQQVPPNMALYGIALAATMFVMAPVAHDIQQRVHEHPLELSNADKLQSSLKVVIEPLQRFMTRNTDPDVVAHLLENTQRMWPKEMADQANKNDLLLAIPAFVLSELQAGFEIGFLIYIPFIVIDLIVSNLLLALGMQMVSPMTLSLPLKLLLFVLVSGWSRLLDSLFYSYM</sequence>
<dbReference type="EMBL" id="U25812">
    <property type="protein sequence ID" value="AAB05075.1"/>
    <property type="molecule type" value="Genomic_DNA"/>
</dbReference>
<dbReference type="SMR" id="Q60236"/>
<dbReference type="GO" id="GO:0005886">
    <property type="term" value="C:plasma membrane"/>
    <property type="evidence" value="ECO:0007669"/>
    <property type="project" value="UniProtKB-SubCell"/>
</dbReference>
<dbReference type="GO" id="GO:0009306">
    <property type="term" value="P:protein secretion"/>
    <property type="evidence" value="ECO:0007669"/>
    <property type="project" value="InterPro"/>
</dbReference>
<dbReference type="GO" id="GO:0052040">
    <property type="term" value="P:symbiont-mediated perturbation of host programmed cell death"/>
    <property type="evidence" value="ECO:0007669"/>
    <property type="project" value="UniProtKB-KW"/>
</dbReference>
<dbReference type="InterPro" id="IPR005838">
    <property type="entry name" value="T3SS_IM_P"/>
</dbReference>
<dbReference type="InterPro" id="IPR005773">
    <property type="entry name" value="T3SS_YscR-like"/>
</dbReference>
<dbReference type="NCBIfam" id="NF009438">
    <property type="entry name" value="PRK12797.1"/>
    <property type="match status" value="1"/>
</dbReference>
<dbReference type="NCBIfam" id="TIGR01102">
    <property type="entry name" value="yscR"/>
    <property type="match status" value="1"/>
</dbReference>
<dbReference type="PANTHER" id="PTHR30587">
    <property type="entry name" value="FLAGELLAR BIOSYNTHETIC PROTEIN FLIP"/>
    <property type="match status" value="1"/>
</dbReference>
<dbReference type="PANTHER" id="PTHR30587:SF2">
    <property type="entry name" value="SURFACE PRESENTATION OF ANTIGENS PROTEIN SPAP"/>
    <property type="match status" value="1"/>
</dbReference>
<dbReference type="Pfam" id="PF00813">
    <property type="entry name" value="FliP"/>
    <property type="match status" value="1"/>
</dbReference>
<dbReference type="PRINTS" id="PR01302">
    <property type="entry name" value="TYPE3IMPPROT"/>
</dbReference>
<dbReference type="PROSITE" id="PS01060">
    <property type="entry name" value="FLIP_1"/>
    <property type="match status" value="1"/>
</dbReference>
<dbReference type="PROSITE" id="PS01061">
    <property type="entry name" value="FLIP_2"/>
    <property type="match status" value="1"/>
</dbReference>
<accession>Q60236</accession>